<accession>A9WR32</accession>
<sequence length="398" mass="43753">MYLEQLSLTDFRSYQQADLGLEPGVNVFIGSNGLGKTNLVEALGYLASLSSHRVSQDGPLIRFGAEQALIRGNLVRGTQRLGLEVEINASRANRARINRANPVRAREILGLCRTVLFAPEDLSLVKGDPGNRRRFLDDLLQSLHPRFAGLRADYERVLKQRNALLKSARGHSRSRQAPSADFLSTIEVWDQHFANHAAQLLSARLKVLEQLKPEMSRAYQELTDGSKELSARYRSSLDGYQEDSDDAAEIHDDEAASLVSASVESLTEHYLLALAAVRQREIERGLTLIGPHRDEVELGLGQAPARGYASHGETWSVALALRLASYYVLKADQEIDGADPILVLDDVFAELDSSRRSKLAHMVAGAEQVLVTAAVDDDVPAELSGRRIRVSAIGVVDD</sequence>
<proteinExistence type="inferred from homology"/>
<dbReference type="EMBL" id="CP000910">
    <property type="protein sequence ID" value="ABY21764.1"/>
    <property type="molecule type" value="Genomic_DNA"/>
</dbReference>
<dbReference type="RefSeq" id="WP_012243472.1">
    <property type="nucleotide sequence ID" value="NC_010168.1"/>
</dbReference>
<dbReference type="SMR" id="A9WR32"/>
<dbReference type="STRING" id="288705.RSal33209_0004"/>
<dbReference type="KEGG" id="rsa:RSal33209_0004"/>
<dbReference type="eggNOG" id="COG1195">
    <property type="taxonomic scope" value="Bacteria"/>
</dbReference>
<dbReference type="HOGENOM" id="CLU_040267_1_1_11"/>
<dbReference type="Proteomes" id="UP000002007">
    <property type="component" value="Chromosome"/>
</dbReference>
<dbReference type="GO" id="GO:0005737">
    <property type="term" value="C:cytoplasm"/>
    <property type="evidence" value="ECO:0007669"/>
    <property type="project" value="UniProtKB-SubCell"/>
</dbReference>
<dbReference type="GO" id="GO:0005524">
    <property type="term" value="F:ATP binding"/>
    <property type="evidence" value="ECO:0007669"/>
    <property type="project" value="UniProtKB-UniRule"/>
</dbReference>
<dbReference type="GO" id="GO:0003697">
    <property type="term" value="F:single-stranded DNA binding"/>
    <property type="evidence" value="ECO:0007669"/>
    <property type="project" value="UniProtKB-UniRule"/>
</dbReference>
<dbReference type="GO" id="GO:0006260">
    <property type="term" value="P:DNA replication"/>
    <property type="evidence" value="ECO:0007669"/>
    <property type="project" value="UniProtKB-UniRule"/>
</dbReference>
<dbReference type="GO" id="GO:0000731">
    <property type="term" value="P:DNA synthesis involved in DNA repair"/>
    <property type="evidence" value="ECO:0007669"/>
    <property type="project" value="TreeGrafter"/>
</dbReference>
<dbReference type="GO" id="GO:0006302">
    <property type="term" value="P:double-strand break repair"/>
    <property type="evidence" value="ECO:0007669"/>
    <property type="project" value="TreeGrafter"/>
</dbReference>
<dbReference type="GO" id="GO:0009432">
    <property type="term" value="P:SOS response"/>
    <property type="evidence" value="ECO:0007669"/>
    <property type="project" value="UniProtKB-UniRule"/>
</dbReference>
<dbReference type="Gene3D" id="3.40.50.300">
    <property type="entry name" value="P-loop containing nucleotide triphosphate hydrolases"/>
    <property type="match status" value="1"/>
</dbReference>
<dbReference type="Gene3D" id="1.20.1050.90">
    <property type="entry name" value="RecF/RecN/SMC, N-terminal domain"/>
    <property type="match status" value="1"/>
</dbReference>
<dbReference type="HAMAP" id="MF_00365">
    <property type="entry name" value="RecF"/>
    <property type="match status" value="1"/>
</dbReference>
<dbReference type="InterPro" id="IPR001238">
    <property type="entry name" value="DNA-binding_RecF"/>
</dbReference>
<dbReference type="InterPro" id="IPR018078">
    <property type="entry name" value="DNA-binding_RecF_CS"/>
</dbReference>
<dbReference type="InterPro" id="IPR027417">
    <property type="entry name" value="P-loop_NTPase"/>
</dbReference>
<dbReference type="InterPro" id="IPR003395">
    <property type="entry name" value="RecF/RecN/SMC_N"/>
</dbReference>
<dbReference type="InterPro" id="IPR042174">
    <property type="entry name" value="RecF_2"/>
</dbReference>
<dbReference type="NCBIfam" id="TIGR00611">
    <property type="entry name" value="recf"/>
    <property type="match status" value="1"/>
</dbReference>
<dbReference type="PANTHER" id="PTHR32182">
    <property type="entry name" value="DNA REPLICATION AND REPAIR PROTEIN RECF"/>
    <property type="match status" value="1"/>
</dbReference>
<dbReference type="PANTHER" id="PTHR32182:SF0">
    <property type="entry name" value="DNA REPLICATION AND REPAIR PROTEIN RECF"/>
    <property type="match status" value="1"/>
</dbReference>
<dbReference type="Pfam" id="PF02463">
    <property type="entry name" value="SMC_N"/>
    <property type="match status" value="1"/>
</dbReference>
<dbReference type="SUPFAM" id="SSF52540">
    <property type="entry name" value="P-loop containing nucleoside triphosphate hydrolases"/>
    <property type="match status" value="1"/>
</dbReference>
<dbReference type="PROSITE" id="PS00617">
    <property type="entry name" value="RECF_1"/>
    <property type="match status" value="1"/>
</dbReference>
<dbReference type="PROSITE" id="PS00618">
    <property type="entry name" value="RECF_2"/>
    <property type="match status" value="1"/>
</dbReference>
<reference key="1">
    <citation type="journal article" date="2008" name="J. Bacteriol.">
        <title>Genome sequence of the fish pathogen Renibacterium salmoninarum suggests reductive evolution away from an environmental Arthrobacter ancestor.</title>
        <authorList>
            <person name="Wiens G.D."/>
            <person name="Rockey D.D."/>
            <person name="Wu Z."/>
            <person name="Chang J."/>
            <person name="Levy R."/>
            <person name="Crane S."/>
            <person name="Chen D.S."/>
            <person name="Capri G.R."/>
            <person name="Burnett J.R."/>
            <person name="Sudheesh P.S."/>
            <person name="Schipma M.J."/>
            <person name="Burd H."/>
            <person name="Bhattacharyya A."/>
            <person name="Rhodes L.D."/>
            <person name="Kaul R."/>
            <person name="Strom M.S."/>
        </authorList>
    </citation>
    <scope>NUCLEOTIDE SEQUENCE [LARGE SCALE GENOMIC DNA]</scope>
    <source>
        <strain>ATCC 33209 / DSM 20767 / JCM 11484 / NBRC 15589 / NCIMB 2235</strain>
    </source>
</reference>
<protein>
    <recommendedName>
        <fullName evidence="1">DNA replication and repair protein RecF</fullName>
    </recommendedName>
</protein>
<comment type="function">
    <text evidence="1">The RecF protein is involved in DNA metabolism; it is required for DNA replication and normal SOS inducibility. RecF binds preferentially to single-stranded, linear DNA. It also seems to bind ATP.</text>
</comment>
<comment type="subcellular location">
    <subcellularLocation>
        <location evidence="1">Cytoplasm</location>
    </subcellularLocation>
</comment>
<comment type="similarity">
    <text evidence="1">Belongs to the RecF family.</text>
</comment>
<name>RECF_RENSM</name>
<organism>
    <name type="scientific">Renibacterium salmoninarum (strain ATCC 33209 / DSM 20767 / JCM 11484 / NBRC 15589 / NCIMB 2235)</name>
    <dbReference type="NCBI Taxonomy" id="288705"/>
    <lineage>
        <taxon>Bacteria</taxon>
        <taxon>Bacillati</taxon>
        <taxon>Actinomycetota</taxon>
        <taxon>Actinomycetes</taxon>
        <taxon>Micrococcales</taxon>
        <taxon>Micrococcaceae</taxon>
        <taxon>Renibacterium</taxon>
    </lineage>
</organism>
<evidence type="ECO:0000255" key="1">
    <source>
        <dbReference type="HAMAP-Rule" id="MF_00365"/>
    </source>
</evidence>
<keyword id="KW-0067">ATP-binding</keyword>
<keyword id="KW-0963">Cytoplasm</keyword>
<keyword id="KW-0227">DNA damage</keyword>
<keyword id="KW-0234">DNA repair</keyword>
<keyword id="KW-0235">DNA replication</keyword>
<keyword id="KW-0238">DNA-binding</keyword>
<keyword id="KW-0547">Nucleotide-binding</keyword>
<keyword id="KW-1185">Reference proteome</keyword>
<keyword id="KW-0742">SOS response</keyword>
<gene>
    <name evidence="1" type="primary">recF</name>
    <name type="ordered locus">RSal33209_0004</name>
</gene>
<feature type="chain" id="PRO_1000079597" description="DNA replication and repair protein RecF">
    <location>
        <begin position="1"/>
        <end position="398"/>
    </location>
</feature>
<feature type="binding site" evidence="1">
    <location>
        <begin position="30"/>
        <end position="37"/>
    </location>
    <ligand>
        <name>ATP</name>
        <dbReference type="ChEBI" id="CHEBI:30616"/>
    </ligand>
</feature>